<organism evidence="9">
    <name type="scientific">Artemisia annua</name>
    <name type="common">Sweet wormwood</name>
    <dbReference type="NCBI Taxonomy" id="35608"/>
    <lineage>
        <taxon>Eukaryota</taxon>
        <taxon>Viridiplantae</taxon>
        <taxon>Streptophyta</taxon>
        <taxon>Embryophyta</taxon>
        <taxon>Tracheophyta</taxon>
        <taxon>Spermatophyta</taxon>
        <taxon>Magnoliopsida</taxon>
        <taxon>eudicotyledons</taxon>
        <taxon>Gunneridae</taxon>
        <taxon>Pentapetalae</taxon>
        <taxon>asterids</taxon>
        <taxon>campanulids</taxon>
        <taxon>Asterales</taxon>
        <taxon>Asteraceae</taxon>
        <taxon>Asteroideae</taxon>
        <taxon>Anthemideae</taxon>
        <taxon>Artemisiinae</taxon>
        <taxon>Artemisia</taxon>
    </lineage>
</organism>
<proteinExistence type="evidence at protein level"/>
<protein>
    <recommendedName>
        <fullName evidence="8">Putative aldehyde oxidase Art an 7</fullName>
        <ecNumber evidence="8">1.2.3.1</ecNumber>
    </recommendedName>
    <alternativeName>
        <fullName evidence="6 7">Allergen Art an 7</fullName>
        <shortName evidence="6">AN70</shortName>
    </alternativeName>
    <allergenName evidence="8">Art an 7.0101</allergenName>
</protein>
<feature type="signal peptide" evidence="1">
    <location>
        <begin position="1"/>
        <end position="23"/>
    </location>
</feature>
<feature type="chain" id="PRO_5014160613" description="Putative aldehyde oxidase Art an 7">
    <location>
        <begin position="24"/>
        <end position="594"/>
    </location>
</feature>
<feature type="region of interest" description="Disordered" evidence="2">
    <location>
        <begin position="28"/>
        <end position="56"/>
    </location>
</feature>
<accession>A0A2H4HHY6</accession>
<evidence type="ECO:0000255" key="1"/>
<evidence type="ECO:0000256" key="2">
    <source>
        <dbReference type="SAM" id="MobiDB-lite"/>
    </source>
</evidence>
<evidence type="ECO:0000269" key="3">
    <source>
    </source>
</evidence>
<evidence type="ECO:0000269" key="4">
    <source>
    </source>
</evidence>
<evidence type="ECO:0000269" key="5">
    <source>
    </source>
</evidence>
<evidence type="ECO:0000303" key="6">
    <source>
    </source>
</evidence>
<evidence type="ECO:0000303" key="7">
    <source>
    </source>
</evidence>
<evidence type="ECO:0000305" key="8"/>
<evidence type="ECO:0000312" key="9">
    <source>
        <dbReference type="EMBL" id="ARQ16437.1"/>
    </source>
</evidence>
<dbReference type="EC" id="1.2.3.1" evidence="8"/>
<dbReference type="EMBL" id="KY428925">
    <property type="protein sequence ID" value="ARQ16437.1"/>
    <property type="molecule type" value="mRNA"/>
</dbReference>
<dbReference type="SMR" id="A0A2H4HHY6"/>
<dbReference type="Allergome" id="12010">
    <property type="allergen name" value="Art an 7"/>
</dbReference>
<dbReference type="Allergome" id="12011">
    <property type="allergen name" value="Art an 7.0101"/>
</dbReference>
<dbReference type="GO" id="GO:0005737">
    <property type="term" value="C:cytoplasm"/>
    <property type="evidence" value="ECO:0000314"/>
    <property type="project" value="UniProtKB"/>
</dbReference>
<dbReference type="GO" id="GO:0004031">
    <property type="term" value="F:aldehyde oxidase activity"/>
    <property type="evidence" value="ECO:0007669"/>
    <property type="project" value="UniProtKB-EC"/>
</dbReference>
<dbReference type="CDD" id="cd02851">
    <property type="entry name" value="E_set_GO_C"/>
    <property type="match status" value="1"/>
</dbReference>
<dbReference type="Gene3D" id="2.130.10.80">
    <property type="entry name" value="Galactose oxidase/kelch, beta-propeller"/>
    <property type="match status" value="1"/>
</dbReference>
<dbReference type="Gene3D" id="2.60.40.10">
    <property type="entry name" value="Immunoglobulins"/>
    <property type="match status" value="1"/>
</dbReference>
<dbReference type="InterPro" id="IPR011043">
    <property type="entry name" value="Gal_Oxase/kelch_b-propeller"/>
</dbReference>
<dbReference type="InterPro" id="IPR037293">
    <property type="entry name" value="Gal_Oxidase_central_sf"/>
</dbReference>
<dbReference type="InterPro" id="IPR009880">
    <property type="entry name" value="Glyoxal_oxidase_N"/>
</dbReference>
<dbReference type="InterPro" id="IPR015202">
    <property type="entry name" value="GO-like_E_set"/>
</dbReference>
<dbReference type="InterPro" id="IPR013783">
    <property type="entry name" value="Ig-like_fold"/>
</dbReference>
<dbReference type="InterPro" id="IPR014756">
    <property type="entry name" value="Ig_E-set"/>
</dbReference>
<dbReference type="PANTHER" id="PTHR32208:SF93">
    <property type="entry name" value="ALDEHYDE OXIDASE GLOX1"/>
    <property type="match status" value="1"/>
</dbReference>
<dbReference type="PANTHER" id="PTHR32208">
    <property type="entry name" value="SECRETED PROTEIN-RELATED"/>
    <property type="match status" value="1"/>
</dbReference>
<dbReference type="Pfam" id="PF07250">
    <property type="entry name" value="Glyoxal_oxid_N"/>
    <property type="match status" value="1"/>
</dbReference>
<dbReference type="Pfam" id="PF09118">
    <property type="entry name" value="GO-like_E_set"/>
    <property type="match status" value="1"/>
</dbReference>
<dbReference type="SUPFAM" id="SSF81296">
    <property type="entry name" value="E set domains"/>
    <property type="match status" value="1"/>
</dbReference>
<dbReference type="SUPFAM" id="SSF50965">
    <property type="entry name" value="Galactose oxidase, central domain"/>
    <property type="match status" value="1"/>
</dbReference>
<reference evidence="9" key="1">
    <citation type="journal article" date="2018" name="Allergy">
        <title>Identification of a 62-kDa major allergen from Artemisia pollen as a putative galactose oxidase.</title>
        <authorList>
            <person name="Fu W."/>
            <person name="Gao Z."/>
            <person name="Gao L."/>
            <person name="Jin J."/>
            <person name="Liu M."/>
            <person name="Sun Y."/>
            <person name="Wu S."/>
            <person name="Wu L."/>
            <person name="Ma H."/>
            <person name="Dong Y."/>
            <person name="Wang X."/>
            <person name="Gao B."/>
            <person name="Wang H."/>
            <person name="Akkerdaas J.H."/>
            <person name="Versteeg S.A."/>
            <person name="van Ree R."/>
        </authorList>
    </citation>
    <scope>NUCLEOTIDE SEQUENCE [MRNA]</scope>
    <scope>PROTEIN SEQUENCE OF 107-135; 176-252; 278-287; 291-343; 349-504 AND 511-545</scope>
    <scope>IDENTIFICATION BY MASS SPECTROMETRY</scope>
    <scope>FUNCTION</scope>
    <scope>TISSUE SPECIFICITY</scope>
    <scope>PTM</scope>
    <scope>MASS SPECTROMETRY</scope>
    <scope>ALLERGEN</scope>
    <scope>3D-STRUCTURE MODELING</scope>
    <source>
        <tissue evidence="9">Pollen</tissue>
    </source>
</reference>
<reference key="2">
    <citation type="journal article" date="2019" name="Allergy">
        <title>Artemisia pollen allergy in China: Component-resolved diagnosis reveals allergic asthma patients have significant multiple allergen sensitization.</title>
        <authorList>
            <person name="Gao Z."/>
            <person name="Fu W.Y."/>
            <person name="Sun Y."/>
            <person name="Gao B."/>
            <person name="Wang H.Y."/>
            <person name="Liu M."/>
            <person name="Luo F.M."/>
            <person name="Zhou X."/>
            <person name="Jin J."/>
            <person name="Zhao L."/>
            <person name="Wu S."/>
            <person name="Liu Y."/>
            <person name="Wu L."/>
            <person name="Wang X."/>
            <person name="Tang N.B."/>
            <person name="Guo B.H."/>
            <person name="Feng Y."/>
            <person name="Zhou J.Y."/>
            <person name="Gadermaier G."/>
            <person name="Ferreira F."/>
            <person name="Versteeg S.A."/>
            <person name="van Ree R."/>
        </authorList>
    </citation>
    <scope>ALLERGEN</scope>
</reference>
<reference key="3">
    <citation type="journal article" date="2019" name="Int. Arch. Allergy Immunol.">
        <title>Localization of Four Allergens in Artemisia Pollen by Immunofluorescent Antibodies.</title>
        <authorList>
            <person name="Gao Z.S."/>
            <person name="Fu W.Y."/>
            <person name="Zhao L."/>
            <person name="Gao L."/>
            <person name="Zhou J.Y."/>
            <person name="Gao B.Y."/>
            <person name="Wu S."/>
            <person name="Versteeg S.A."/>
            <person name="Ferreira F."/>
            <person name="Gadermaier G."/>
            <person name="van Ree R."/>
        </authorList>
    </citation>
    <scope>SUBCELLULAR LOCATION</scope>
    <scope>TISSUE SPECIFICITY</scope>
</reference>
<sequence length="594" mass="64526">MASSIKTVILFLLPLLLAYSVLAAPDITDGGDKPGPEIDDGGGDKPVPGNNDGASDYAKPAFEPEFMGAWVIDNPNAGVAAMQLQLMPNDQIVWFDTTSLGASGYKLPEGTPCPINPDANNQPDCYAHGIAYDWKTSKYRPLTLQGDAWCSSGNLWPNGNLMATGGTFSGDKAIRVIANDDPKGDFTTKIGALADTRWYSSNQVLPDGSSVVLGGRDSYSYEIVPPQMEFKPKRFDLPFMQQTTEPPLGPGRPVENNLYPFLFLLPDGNIFLFANNRAITFEPATGKTVKEFPVLPGGSRNYPPSGSAALFPLKLTADNAPVIPEIVICGGNQPNAYELVDARHVTEKQFLPALQDCNRIQPMAADAAWIPEQNMPSPRTMGDLIHLANGDMLMLNGAKKGTSGWEDATEANLTPVLYTPYKPMGQRFKELTPTTIARMYHSCSALLPDTRVLVAGSNMHQFYTFDTEFPTELRVEKFSPPYLDPALETERTQIDPANTDAVLKYGKPFKITAALMEKQPLVLGEVKVTLLYPPFTTHGFSQNQRMIVPAITSVQNGVITAVAPPSGQIAPPGYYIMFVSHLGIPGAGIWVHID</sequence>
<comment type="function">
    <text evidence="3 8">Catalyzes the oxidation of aldehydes to the corresponding carboxylate by coupling the reaction to the reduction of dioxygen to hydrogen peroxide. Substrates include glyoxal and other aldehydes (Probable). Does not have enzymatic activity on D-galactose (PubMed:29220102).</text>
</comment>
<comment type="catalytic activity">
    <reaction evidence="8">
        <text>an aldehyde + O2 + H2O = a carboxylate + H2O2 + H(+)</text>
        <dbReference type="Rhea" id="RHEA:16829"/>
        <dbReference type="ChEBI" id="CHEBI:15377"/>
        <dbReference type="ChEBI" id="CHEBI:15378"/>
        <dbReference type="ChEBI" id="CHEBI:15379"/>
        <dbReference type="ChEBI" id="CHEBI:16240"/>
        <dbReference type="ChEBI" id="CHEBI:17478"/>
        <dbReference type="ChEBI" id="CHEBI:29067"/>
        <dbReference type="EC" id="1.2.3.1"/>
    </reaction>
</comment>
<comment type="subcellular location">
    <subcellularLocation>
        <location evidence="5">Cytoplasm</location>
    </subcellularLocation>
    <text evidence="5">Localized around nucleus.</text>
</comment>
<comment type="tissue specificity">
    <text evidence="3 5">Expressed in pollen (at protein level).</text>
</comment>
<comment type="PTM">
    <text evidence="3">The N-terminus is blocked.</text>
</comment>
<comment type="PTM">
    <text evidence="3">Glycosylated.</text>
</comment>
<comment type="mass spectrometry" mass="61954.35" method="MALDI" evidence="3">
    <text>The measured mass is that of the mature protein.</text>
</comment>
<comment type="allergen">
    <text evidence="3 4">Causes an allergic reaction in human. Binds to IgE of patients allergic to mugwort pollen (PubMed:29220102, PubMed:30155917). The natural protein binds to IgE in 94% and 95% of the 113 Chinese and 20 Dutch patients tested, respectively. The natural protein gives a positive reaction in 50% of the 14 Chinese patients tested by intradermal skin testing. All except one of these positives are also positive by ImmunoCAP test. The recombinant protein binds to IgE in 4% and 50% of the 54 Chinese and 20 Dutch patients tested, respectively. The lack of IgE-binding to the recombinant protein is not due to the absence of cross-reactive carbohydrate determinants (CCD), although in a subset of (Dutch) sera CCD does seem to play a role in the IgE recognition (PubMed:29220102). Binds to IgE in 80% of the 240 Chinese patients tested. Adult group has a significantly lower IgE level than the child and teenager group. The patients from Southwestern China have significantly lower frequency of sensitization and lower IgE levels against this protein than the patients from Northern China. Patients allergic to multiple Artemisia allergens, including Art an 7, Art v 1 and Art v 3, have a higher risk of developing allergic asthma (PubMed:30155917).</text>
</comment>
<name>GLOX_ARTAN</name>
<keyword id="KW-0020">Allergen</keyword>
<keyword id="KW-0963">Cytoplasm</keyword>
<keyword id="KW-0903">Direct protein sequencing</keyword>
<keyword id="KW-0325">Glycoprotein</keyword>
<keyword id="KW-0560">Oxidoreductase</keyword>
<keyword id="KW-0732">Signal</keyword>